<feature type="chain" id="PRO_1000047538" description="Glutamate racemase">
    <location>
        <begin position="1"/>
        <end position="291"/>
    </location>
</feature>
<feature type="region of interest" description="Disordered" evidence="2">
    <location>
        <begin position="234"/>
        <end position="257"/>
    </location>
</feature>
<feature type="compositionally biased region" description="Low complexity" evidence="2">
    <location>
        <begin position="234"/>
        <end position="247"/>
    </location>
</feature>
<feature type="active site" description="Proton donor/acceptor" evidence="1">
    <location>
        <position position="75"/>
    </location>
</feature>
<feature type="active site" description="Proton donor/acceptor" evidence="1">
    <location>
        <position position="187"/>
    </location>
</feature>
<feature type="binding site" evidence="1">
    <location>
        <begin position="12"/>
        <end position="13"/>
    </location>
    <ligand>
        <name>substrate</name>
    </ligand>
</feature>
<feature type="binding site" evidence="1">
    <location>
        <begin position="44"/>
        <end position="45"/>
    </location>
    <ligand>
        <name>substrate</name>
    </ligand>
</feature>
<feature type="binding site" evidence="1">
    <location>
        <begin position="76"/>
        <end position="77"/>
    </location>
    <ligand>
        <name>substrate</name>
    </ligand>
</feature>
<feature type="binding site" evidence="1">
    <location>
        <begin position="188"/>
        <end position="189"/>
    </location>
    <ligand>
        <name>substrate</name>
    </ligand>
</feature>
<reference key="1">
    <citation type="journal article" date="2009" name="Appl. Environ. Microbiol.">
        <title>Three genomes from the phylum Acidobacteria provide insight into the lifestyles of these microorganisms in soils.</title>
        <authorList>
            <person name="Ward N.L."/>
            <person name="Challacombe J.F."/>
            <person name="Janssen P.H."/>
            <person name="Henrissat B."/>
            <person name="Coutinho P.M."/>
            <person name="Wu M."/>
            <person name="Xie G."/>
            <person name="Haft D.H."/>
            <person name="Sait M."/>
            <person name="Badger J."/>
            <person name="Barabote R.D."/>
            <person name="Bradley B."/>
            <person name="Brettin T.S."/>
            <person name="Brinkac L.M."/>
            <person name="Bruce D."/>
            <person name="Creasy T."/>
            <person name="Daugherty S.C."/>
            <person name="Davidsen T.M."/>
            <person name="DeBoy R.T."/>
            <person name="Detter J.C."/>
            <person name="Dodson R.J."/>
            <person name="Durkin A.S."/>
            <person name="Ganapathy A."/>
            <person name="Gwinn-Giglio M."/>
            <person name="Han C.S."/>
            <person name="Khouri H."/>
            <person name="Kiss H."/>
            <person name="Kothari S.P."/>
            <person name="Madupu R."/>
            <person name="Nelson K.E."/>
            <person name="Nelson W.C."/>
            <person name="Paulsen I."/>
            <person name="Penn K."/>
            <person name="Ren Q."/>
            <person name="Rosovitz M.J."/>
            <person name="Selengut J.D."/>
            <person name="Shrivastava S."/>
            <person name="Sullivan S.A."/>
            <person name="Tapia R."/>
            <person name="Thompson L.S."/>
            <person name="Watkins K.L."/>
            <person name="Yang Q."/>
            <person name="Yu C."/>
            <person name="Zafar N."/>
            <person name="Zhou L."/>
            <person name="Kuske C.R."/>
        </authorList>
    </citation>
    <scope>NUCLEOTIDE SEQUENCE [LARGE SCALE GENOMIC DNA]</scope>
    <source>
        <strain>Ellin345</strain>
    </source>
</reference>
<dbReference type="EC" id="5.1.1.3" evidence="1"/>
<dbReference type="EMBL" id="CP000360">
    <property type="protein sequence ID" value="ABF41510.1"/>
    <property type="molecule type" value="Genomic_DNA"/>
</dbReference>
<dbReference type="RefSeq" id="WP_011523311.1">
    <property type="nucleotide sequence ID" value="NC_008009.1"/>
</dbReference>
<dbReference type="SMR" id="Q1INP0"/>
<dbReference type="STRING" id="204669.Acid345_2509"/>
<dbReference type="EnsemblBacteria" id="ABF41510">
    <property type="protein sequence ID" value="ABF41510"/>
    <property type="gene ID" value="Acid345_2509"/>
</dbReference>
<dbReference type="KEGG" id="aba:Acid345_2509"/>
<dbReference type="eggNOG" id="COG0796">
    <property type="taxonomic scope" value="Bacteria"/>
</dbReference>
<dbReference type="HOGENOM" id="CLU_052344_0_2_0"/>
<dbReference type="OrthoDB" id="9801055at2"/>
<dbReference type="UniPathway" id="UPA00219"/>
<dbReference type="Proteomes" id="UP000002432">
    <property type="component" value="Chromosome"/>
</dbReference>
<dbReference type="GO" id="GO:0008881">
    <property type="term" value="F:glutamate racemase activity"/>
    <property type="evidence" value="ECO:0007669"/>
    <property type="project" value="UniProtKB-UniRule"/>
</dbReference>
<dbReference type="GO" id="GO:0071555">
    <property type="term" value="P:cell wall organization"/>
    <property type="evidence" value="ECO:0007669"/>
    <property type="project" value="UniProtKB-KW"/>
</dbReference>
<dbReference type="GO" id="GO:0009252">
    <property type="term" value="P:peptidoglycan biosynthetic process"/>
    <property type="evidence" value="ECO:0007669"/>
    <property type="project" value="UniProtKB-UniRule"/>
</dbReference>
<dbReference type="GO" id="GO:0008360">
    <property type="term" value="P:regulation of cell shape"/>
    <property type="evidence" value="ECO:0007669"/>
    <property type="project" value="UniProtKB-KW"/>
</dbReference>
<dbReference type="FunFam" id="3.40.50.1860:FF:000001">
    <property type="entry name" value="Glutamate racemase"/>
    <property type="match status" value="1"/>
</dbReference>
<dbReference type="Gene3D" id="3.40.50.1860">
    <property type="match status" value="2"/>
</dbReference>
<dbReference type="HAMAP" id="MF_00258">
    <property type="entry name" value="Glu_racemase"/>
    <property type="match status" value="1"/>
</dbReference>
<dbReference type="InterPro" id="IPR015942">
    <property type="entry name" value="Asp/Glu/hydantoin_racemase"/>
</dbReference>
<dbReference type="InterPro" id="IPR001920">
    <property type="entry name" value="Asp/Glu_race"/>
</dbReference>
<dbReference type="InterPro" id="IPR018187">
    <property type="entry name" value="Asp/Glu_racemase_AS_1"/>
</dbReference>
<dbReference type="InterPro" id="IPR033134">
    <property type="entry name" value="Asp/Glu_racemase_AS_2"/>
</dbReference>
<dbReference type="InterPro" id="IPR004391">
    <property type="entry name" value="Glu_race"/>
</dbReference>
<dbReference type="NCBIfam" id="TIGR00067">
    <property type="entry name" value="glut_race"/>
    <property type="match status" value="1"/>
</dbReference>
<dbReference type="PANTHER" id="PTHR21198">
    <property type="entry name" value="GLUTAMATE RACEMASE"/>
    <property type="match status" value="1"/>
</dbReference>
<dbReference type="PANTHER" id="PTHR21198:SF2">
    <property type="entry name" value="GLUTAMATE RACEMASE"/>
    <property type="match status" value="1"/>
</dbReference>
<dbReference type="Pfam" id="PF01177">
    <property type="entry name" value="Asp_Glu_race"/>
    <property type="match status" value="1"/>
</dbReference>
<dbReference type="SUPFAM" id="SSF53681">
    <property type="entry name" value="Aspartate/glutamate racemase"/>
    <property type="match status" value="2"/>
</dbReference>
<dbReference type="PROSITE" id="PS00923">
    <property type="entry name" value="ASP_GLU_RACEMASE_1"/>
    <property type="match status" value="1"/>
</dbReference>
<dbReference type="PROSITE" id="PS00924">
    <property type="entry name" value="ASP_GLU_RACEMASE_2"/>
    <property type="match status" value="1"/>
</dbReference>
<gene>
    <name evidence="1" type="primary">murI</name>
    <name type="ordered locus">Acid345_2509</name>
</gene>
<protein>
    <recommendedName>
        <fullName evidence="1">Glutamate racemase</fullName>
        <ecNumber evidence="1">5.1.1.3</ecNumber>
    </recommendedName>
</protein>
<accession>Q1INP0</accession>
<comment type="function">
    <text evidence="1">Provides the (R)-glutamate required for cell wall biosynthesis.</text>
</comment>
<comment type="catalytic activity">
    <reaction evidence="1">
        <text>L-glutamate = D-glutamate</text>
        <dbReference type="Rhea" id="RHEA:12813"/>
        <dbReference type="ChEBI" id="CHEBI:29985"/>
        <dbReference type="ChEBI" id="CHEBI:29986"/>
        <dbReference type="EC" id="5.1.1.3"/>
    </reaction>
</comment>
<comment type="pathway">
    <text evidence="1">Cell wall biogenesis; peptidoglycan biosynthesis.</text>
</comment>
<comment type="similarity">
    <text evidence="1">Belongs to the aspartate/glutamate racemases family.</text>
</comment>
<proteinExistence type="inferred from homology"/>
<name>MURI_KORVE</name>
<organism>
    <name type="scientific">Koribacter versatilis (strain Ellin345)</name>
    <dbReference type="NCBI Taxonomy" id="204669"/>
    <lineage>
        <taxon>Bacteria</taxon>
        <taxon>Pseudomonadati</taxon>
        <taxon>Acidobacteriota</taxon>
        <taxon>Terriglobia</taxon>
        <taxon>Terriglobales</taxon>
        <taxon>Candidatus Korobacteraceae</taxon>
        <taxon>Candidatus Korobacter</taxon>
    </lineage>
</organism>
<evidence type="ECO:0000255" key="1">
    <source>
        <dbReference type="HAMAP-Rule" id="MF_00258"/>
    </source>
</evidence>
<evidence type="ECO:0000256" key="2">
    <source>
        <dbReference type="SAM" id="MobiDB-lite"/>
    </source>
</evidence>
<keyword id="KW-0133">Cell shape</keyword>
<keyword id="KW-0961">Cell wall biogenesis/degradation</keyword>
<keyword id="KW-0413">Isomerase</keyword>
<keyword id="KW-0573">Peptidoglycan synthesis</keyword>
<keyword id="KW-1185">Reference proteome</keyword>
<sequence>MSRQRPVIGVFDSGFGGLTVLREIVRLVPNAEYLYFGDTARLPYGTKSADTVARYALGACHFLEGQGAEHLVIACNTATALAMDAIEAKANVPAIGVVEPGASAAAAISKTRSVAVIGTEATISSHAYHHALERLGINAYEKATPLLVPLVEEGWTDHPVTKQVAEIYLQDAFVRREQRSDVLVLGCTHYPLIRPLLRKVVPSDVAIVDSAESTAKALAKKLGIAPPSASAAGATQAAGARAQMAPSAPEPKEGTPDFRFFVTDSVQKFRRLGSGFLGHPVDNVEHVDLGG</sequence>